<accession>A8F6M1</accession>
<name>LDH_PSELT</name>
<reference key="1">
    <citation type="submission" date="2007-08" db="EMBL/GenBank/DDBJ databases">
        <title>Complete sequence of Thermotoga lettingae TMO.</title>
        <authorList>
            <consortium name="US DOE Joint Genome Institute"/>
            <person name="Copeland A."/>
            <person name="Lucas S."/>
            <person name="Lapidus A."/>
            <person name="Barry K."/>
            <person name="Glavina del Rio T."/>
            <person name="Dalin E."/>
            <person name="Tice H."/>
            <person name="Pitluck S."/>
            <person name="Foster B."/>
            <person name="Bruce D."/>
            <person name="Schmutz J."/>
            <person name="Larimer F."/>
            <person name="Land M."/>
            <person name="Hauser L."/>
            <person name="Kyrpides N."/>
            <person name="Mikhailova N."/>
            <person name="Nelson K."/>
            <person name="Gogarten J.P."/>
            <person name="Noll K."/>
            <person name="Richardson P."/>
        </authorList>
    </citation>
    <scope>NUCLEOTIDE SEQUENCE [LARGE SCALE GENOMIC DNA]</scope>
    <source>
        <strain>ATCC BAA-301 / DSM 14385 / NBRC 107922 / TMO</strain>
    </source>
</reference>
<sequence>MKVSIFGAGRVGISIAYSLLHTKIADEMVIVDIDIKRAEGEVLDLYHSTPFLKRCNITAGNPHDILNSDFVIITAGASQSAGESRLSLTKRNVKIIRQIAAQIKKYSPDAIVINVSNPVDVLSYVLWKETKFNWRKVIGTGTILDTARFRALVAKQCGVSPMSVHAYIIGEHGDSELLVWSNATIGGVSIKRFCQFCTNKNCTPLESLFEQTKNAAYEIIEKKGATNLAIGTATAALVESIYRDEKRVWTVSVFQDNLYIGFPAILGKNGVEKLVPVKLNSVEKEAFERSKEVIKKYIKEGEKSEREESSSN</sequence>
<gene>
    <name evidence="1" type="primary">ldh</name>
    <name type="ordered locus">Tlet_1246</name>
</gene>
<organism>
    <name type="scientific">Pseudothermotoga lettingae (strain ATCC BAA-301 / DSM 14385 / NBRC 107922 / TMO)</name>
    <name type="common">Thermotoga lettingae</name>
    <dbReference type="NCBI Taxonomy" id="416591"/>
    <lineage>
        <taxon>Bacteria</taxon>
        <taxon>Thermotogati</taxon>
        <taxon>Thermotogota</taxon>
        <taxon>Thermotogae</taxon>
        <taxon>Thermotogales</taxon>
        <taxon>Thermotogaceae</taxon>
        <taxon>Pseudothermotoga</taxon>
    </lineage>
</organism>
<comment type="function">
    <text evidence="1">Catalyzes the conversion of lactate to pyruvate.</text>
</comment>
<comment type="catalytic activity">
    <reaction evidence="1">
        <text>(S)-lactate + NAD(+) = pyruvate + NADH + H(+)</text>
        <dbReference type="Rhea" id="RHEA:23444"/>
        <dbReference type="ChEBI" id="CHEBI:15361"/>
        <dbReference type="ChEBI" id="CHEBI:15378"/>
        <dbReference type="ChEBI" id="CHEBI:16651"/>
        <dbReference type="ChEBI" id="CHEBI:57540"/>
        <dbReference type="ChEBI" id="CHEBI:57945"/>
        <dbReference type="EC" id="1.1.1.27"/>
    </reaction>
</comment>
<comment type="activity regulation">
    <text evidence="1">Allosterically activated by fructose 1,6-bisphosphate (FBP).</text>
</comment>
<comment type="pathway">
    <text evidence="1">Fermentation; pyruvate fermentation to lactate; (S)-lactate from pyruvate: step 1/1.</text>
</comment>
<comment type="subunit">
    <text evidence="1">Homotetramer.</text>
</comment>
<comment type="subcellular location">
    <subcellularLocation>
        <location evidence="1">Cytoplasm</location>
    </subcellularLocation>
</comment>
<comment type="similarity">
    <text evidence="1">Belongs to the LDH/MDH superfamily. LDH family.</text>
</comment>
<protein>
    <recommendedName>
        <fullName evidence="1">L-lactate dehydrogenase</fullName>
        <shortName evidence="1">L-LDH</shortName>
        <ecNumber evidence="1">1.1.1.27</ecNumber>
    </recommendedName>
</protein>
<dbReference type="EC" id="1.1.1.27" evidence="1"/>
<dbReference type="EMBL" id="CP000812">
    <property type="protein sequence ID" value="ABV33805.1"/>
    <property type="molecule type" value="Genomic_DNA"/>
</dbReference>
<dbReference type="RefSeq" id="WP_012003281.1">
    <property type="nucleotide sequence ID" value="NZ_BSDV01000001.1"/>
</dbReference>
<dbReference type="SMR" id="A8F6M1"/>
<dbReference type="STRING" id="416591.Tlet_1246"/>
<dbReference type="KEGG" id="tle:Tlet_1246"/>
<dbReference type="eggNOG" id="COG0039">
    <property type="taxonomic scope" value="Bacteria"/>
</dbReference>
<dbReference type="HOGENOM" id="CLU_045401_1_1_0"/>
<dbReference type="OrthoDB" id="9802969at2"/>
<dbReference type="UniPathway" id="UPA00554">
    <property type="reaction ID" value="UER00611"/>
</dbReference>
<dbReference type="Proteomes" id="UP000002016">
    <property type="component" value="Chromosome"/>
</dbReference>
<dbReference type="GO" id="GO:0005737">
    <property type="term" value="C:cytoplasm"/>
    <property type="evidence" value="ECO:0007669"/>
    <property type="project" value="UniProtKB-SubCell"/>
</dbReference>
<dbReference type="GO" id="GO:0004459">
    <property type="term" value="F:L-lactate dehydrogenase activity"/>
    <property type="evidence" value="ECO:0007669"/>
    <property type="project" value="UniProtKB-UniRule"/>
</dbReference>
<dbReference type="GO" id="GO:0006096">
    <property type="term" value="P:glycolytic process"/>
    <property type="evidence" value="ECO:0007669"/>
    <property type="project" value="UniProtKB-UniRule"/>
</dbReference>
<dbReference type="GO" id="GO:0006089">
    <property type="term" value="P:lactate metabolic process"/>
    <property type="evidence" value="ECO:0007669"/>
    <property type="project" value="TreeGrafter"/>
</dbReference>
<dbReference type="CDD" id="cd05292">
    <property type="entry name" value="LDH_2"/>
    <property type="match status" value="1"/>
</dbReference>
<dbReference type="Gene3D" id="3.90.110.10">
    <property type="entry name" value="Lactate dehydrogenase/glycoside hydrolase, family 4, C-terminal"/>
    <property type="match status" value="1"/>
</dbReference>
<dbReference type="Gene3D" id="3.40.50.720">
    <property type="entry name" value="NAD(P)-binding Rossmann-like Domain"/>
    <property type="match status" value="1"/>
</dbReference>
<dbReference type="HAMAP" id="MF_00488">
    <property type="entry name" value="Lactate_dehydrog"/>
    <property type="match status" value="1"/>
</dbReference>
<dbReference type="InterPro" id="IPR001557">
    <property type="entry name" value="L-lactate/malate_DH"/>
</dbReference>
<dbReference type="InterPro" id="IPR011304">
    <property type="entry name" value="L-lactate_DH"/>
</dbReference>
<dbReference type="InterPro" id="IPR018177">
    <property type="entry name" value="L-lactate_DH_AS"/>
</dbReference>
<dbReference type="InterPro" id="IPR022383">
    <property type="entry name" value="Lactate/malate_DH_C"/>
</dbReference>
<dbReference type="InterPro" id="IPR001236">
    <property type="entry name" value="Lactate/malate_DH_N"/>
</dbReference>
<dbReference type="InterPro" id="IPR015955">
    <property type="entry name" value="Lactate_DH/Glyco_Ohase_4_C"/>
</dbReference>
<dbReference type="InterPro" id="IPR036291">
    <property type="entry name" value="NAD(P)-bd_dom_sf"/>
</dbReference>
<dbReference type="NCBIfam" id="TIGR01771">
    <property type="entry name" value="L-LDH-NAD"/>
    <property type="match status" value="1"/>
</dbReference>
<dbReference type="PANTHER" id="PTHR43128">
    <property type="entry name" value="L-2-HYDROXYCARBOXYLATE DEHYDROGENASE (NAD(P)(+))"/>
    <property type="match status" value="1"/>
</dbReference>
<dbReference type="PANTHER" id="PTHR43128:SF16">
    <property type="entry name" value="L-LACTATE DEHYDROGENASE"/>
    <property type="match status" value="1"/>
</dbReference>
<dbReference type="Pfam" id="PF02866">
    <property type="entry name" value="Ldh_1_C"/>
    <property type="match status" value="1"/>
</dbReference>
<dbReference type="Pfam" id="PF00056">
    <property type="entry name" value="Ldh_1_N"/>
    <property type="match status" value="1"/>
</dbReference>
<dbReference type="PIRSF" id="PIRSF000102">
    <property type="entry name" value="Lac_mal_DH"/>
    <property type="match status" value="1"/>
</dbReference>
<dbReference type="PRINTS" id="PR00086">
    <property type="entry name" value="LLDHDRGNASE"/>
</dbReference>
<dbReference type="SUPFAM" id="SSF56327">
    <property type="entry name" value="LDH C-terminal domain-like"/>
    <property type="match status" value="1"/>
</dbReference>
<dbReference type="SUPFAM" id="SSF51735">
    <property type="entry name" value="NAD(P)-binding Rossmann-fold domains"/>
    <property type="match status" value="1"/>
</dbReference>
<dbReference type="PROSITE" id="PS00064">
    <property type="entry name" value="L_LDH"/>
    <property type="match status" value="1"/>
</dbReference>
<proteinExistence type="inferred from homology"/>
<keyword id="KW-0021">Allosteric enzyme</keyword>
<keyword id="KW-0963">Cytoplasm</keyword>
<keyword id="KW-0520">NAD</keyword>
<keyword id="KW-0560">Oxidoreductase</keyword>
<keyword id="KW-0597">Phosphoprotein</keyword>
<keyword id="KW-1185">Reference proteome</keyword>
<feature type="chain" id="PRO_1000060440" description="L-lactate dehydrogenase">
    <location>
        <begin position="1"/>
        <end position="312"/>
    </location>
</feature>
<feature type="active site" description="Proton acceptor" evidence="1">
    <location>
        <position position="172"/>
    </location>
</feature>
<feature type="binding site" evidence="1">
    <location>
        <position position="11"/>
    </location>
    <ligand>
        <name>NAD(+)</name>
        <dbReference type="ChEBI" id="CHEBI:57540"/>
    </ligand>
</feature>
<feature type="binding site" evidence="1">
    <location>
        <position position="32"/>
    </location>
    <ligand>
        <name>NAD(+)</name>
        <dbReference type="ChEBI" id="CHEBI:57540"/>
    </ligand>
</feature>
<feature type="binding site" evidence="1">
    <location>
        <position position="37"/>
    </location>
    <ligand>
        <name>NAD(+)</name>
        <dbReference type="ChEBI" id="CHEBI:57540"/>
    </ligand>
</feature>
<feature type="binding site" evidence="1">
    <location>
        <begin position="76"/>
        <end position="77"/>
    </location>
    <ligand>
        <name>NAD(+)</name>
        <dbReference type="ChEBI" id="CHEBI:57540"/>
    </ligand>
</feature>
<feature type="binding site" evidence="1">
    <location>
        <position position="79"/>
    </location>
    <ligand>
        <name>substrate</name>
    </ligand>
</feature>
<feature type="binding site" evidence="1">
    <location>
        <position position="85"/>
    </location>
    <ligand>
        <name>substrate</name>
    </ligand>
</feature>
<feature type="binding site" evidence="1">
    <location>
        <begin position="115"/>
        <end position="117"/>
    </location>
    <ligand>
        <name>NAD(+)</name>
        <dbReference type="ChEBI" id="CHEBI:57540"/>
    </ligand>
</feature>
<feature type="binding site" evidence="1">
    <location>
        <begin position="117"/>
        <end position="120"/>
    </location>
    <ligand>
        <name>substrate</name>
    </ligand>
</feature>
<feature type="binding site" evidence="1">
    <location>
        <position position="140"/>
    </location>
    <ligand>
        <name>NAD(+)</name>
        <dbReference type="ChEBI" id="CHEBI:57540"/>
    </ligand>
</feature>
<feature type="binding site" evidence="1">
    <location>
        <begin position="145"/>
        <end position="148"/>
    </location>
    <ligand>
        <name>substrate</name>
    </ligand>
</feature>
<feature type="binding site" evidence="1">
    <location>
        <position position="150"/>
    </location>
    <ligand>
        <name>beta-D-fructose 1,6-bisphosphate</name>
        <dbReference type="ChEBI" id="CHEBI:32966"/>
        <note>allosteric activator</note>
    </ligand>
</feature>
<feature type="binding site" evidence="1">
    <location>
        <position position="165"/>
    </location>
    <ligand>
        <name>beta-D-fructose 1,6-bisphosphate</name>
        <dbReference type="ChEBI" id="CHEBI:32966"/>
        <note>allosteric activator</note>
    </ligand>
</feature>
<feature type="binding site" evidence="1">
    <location>
        <position position="226"/>
    </location>
    <ligand>
        <name>substrate</name>
    </ligand>
</feature>
<feature type="modified residue" description="Phosphotyrosine" evidence="1">
    <location>
        <position position="217"/>
    </location>
</feature>
<evidence type="ECO:0000255" key="1">
    <source>
        <dbReference type="HAMAP-Rule" id="MF_00488"/>
    </source>
</evidence>